<proteinExistence type="inferred from homology"/>
<accession>Q897L4</accession>
<name>COBQ_CLOTE</name>
<comment type="function">
    <text evidence="1">Catalyzes amidations at positions B, D, E, and G on adenosylcobyrinic A,C-diamide. NH(2) groups are provided by glutamine, and one molecule of ATP is hydrogenolyzed for each amidation.</text>
</comment>
<comment type="pathway">
    <text evidence="1">Cofactor biosynthesis; adenosylcobalamin biosynthesis.</text>
</comment>
<comment type="similarity">
    <text evidence="1">Belongs to the CobB/CobQ family. CobQ subfamily.</text>
</comment>
<dbReference type="EMBL" id="AE015927">
    <property type="protein sequence ID" value="AAO35322.1"/>
    <property type="molecule type" value="Genomic_DNA"/>
</dbReference>
<dbReference type="SMR" id="Q897L4"/>
<dbReference type="STRING" id="212717.CTC_00720"/>
<dbReference type="KEGG" id="ctc:CTC_00720"/>
<dbReference type="HOGENOM" id="CLU_019250_2_2_9"/>
<dbReference type="UniPathway" id="UPA00148"/>
<dbReference type="Proteomes" id="UP000001412">
    <property type="component" value="Chromosome"/>
</dbReference>
<dbReference type="GO" id="GO:0015420">
    <property type="term" value="F:ABC-type vitamin B12 transporter activity"/>
    <property type="evidence" value="ECO:0007669"/>
    <property type="project" value="UniProtKB-UniRule"/>
</dbReference>
<dbReference type="GO" id="GO:0003824">
    <property type="term" value="F:catalytic activity"/>
    <property type="evidence" value="ECO:0007669"/>
    <property type="project" value="InterPro"/>
</dbReference>
<dbReference type="GO" id="GO:0009236">
    <property type="term" value="P:cobalamin biosynthetic process"/>
    <property type="evidence" value="ECO:0007669"/>
    <property type="project" value="UniProtKB-UniRule"/>
</dbReference>
<dbReference type="CDD" id="cd05389">
    <property type="entry name" value="CobQ_N"/>
    <property type="match status" value="1"/>
</dbReference>
<dbReference type="CDD" id="cd01750">
    <property type="entry name" value="GATase1_CobQ"/>
    <property type="match status" value="1"/>
</dbReference>
<dbReference type="Gene3D" id="3.40.50.880">
    <property type="match status" value="1"/>
</dbReference>
<dbReference type="Gene3D" id="3.40.50.300">
    <property type="entry name" value="P-loop containing nucleotide triphosphate hydrolases"/>
    <property type="match status" value="1"/>
</dbReference>
<dbReference type="HAMAP" id="MF_00028">
    <property type="entry name" value="CobQ"/>
    <property type="match status" value="1"/>
</dbReference>
<dbReference type="InterPro" id="IPR029062">
    <property type="entry name" value="Class_I_gatase-like"/>
</dbReference>
<dbReference type="InterPro" id="IPR002586">
    <property type="entry name" value="CobQ/CobB/MinD/ParA_Nub-bd_dom"/>
</dbReference>
<dbReference type="InterPro" id="IPR033949">
    <property type="entry name" value="CobQ_GATase1"/>
</dbReference>
<dbReference type="InterPro" id="IPR047045">
    <property type="entry name" value="CobQ_N"/>
</dbReference>
<dbReference type="InterPro" id="IPR004459">
    <property type="entry name" value="CobQ_synth"/>
</dbReference>
<dbReference type="InterPro" id="IPR011698">
    <property type="entry name" value="GATase_3"/>
</dbReference>
<dbReference type="InterPro" id="IPR027417">
    <property type="entry name" value="P-loop_NTPase"/>
</dbReference>
<dbReference type="NCBIfam" id="TIGR00313">
    <property type="entry name" value="cobQ"/>
    <property type="match status" value="1"/>
</dbReference>
<dbReference type="NCBIfam" id="NF001989">
    <property type="entry name" value="PRK00784.1"/>
    <property type="match status" value="1"/>
</dbReference>
<dbReference type="PANTHER" id="PTHR21343:SF1">
    <property type="entry name" value="COBYRIC ACID SYNTHASE"/>
    <property type="match status" value="1"/>
</dbReference>
<dbReference type="PANTHER" id="PTHR21343">
    <property type="entry name" value="DETHIOBIOTIN SYNTHETASE"/>
    <property type="match status" value="1"/>
</dbReference>
<dbReference type="Pfam" id="PF01656">
    <property type="entry name" value="CbiA"/>
    <property type="match status" value="1"/>
</dbReference>
<dbReference type="Pfam" id="PF07685">
    <property type="entry name" value="GATase_3"/>
    <property type="match status" value="1"/>
</dbReference>
<dbReference type="SUPFAM" id="SSF52317">
    <property type="entry name" value="Class I glutamine amidotransferase-like"/>
    <property type="match status" value="1"/>
</dbReference>
<dbReference type="SUPFAM" id="SSF52540">
    <property type="entry name" value="P-loop containing nucleoside triphosphate hydrolases"/>
    <property type="match status" value="1"/>
</dbReference>
<dbReference type="PROSITE" id="PS51274">
    <property type="entry name" value="GATASE_COBBQ"/>
    <property type="match status" value="1"/>
</dbReference>
<reference key="1">
    <citation type="journal article" date="2003" name="Proc. Natl. Acad. Sci. U.S.A.">
        <title>The genome sequence of Clostridium tetani, the causative agent of tetanus disease.</title>
        <authorList>
            <person name="Brueggemann H."/>
            <person name="Baeumer S."/>
            <person name="Fricke W.F."/>
            <person name="Wiezer A."/>
            <person name="Liesegang H."/>
            <person name="Decker I."/>
            <person name="Herzberg C."/>
            <person name="Martinez-Arias R."/>
            <person name="Merkl R."/>
            <person name="Henne A."/>
            <person name="Gottschalk G."/>
        </authorList>
    </citation>
    <scope>NUCLEOTIDE SEQUENCE [LARGE SCALE GENOMIC DNA]</scope>
    <source>
        <strain>Massachusetts / E88</strain>
    </source>
</reference>
<gene>
    <name evidence="1" type="primary">cobQ</name>
    <name type="ordered locus">CTC_00720</name>
</gene>
<feature type="chain" id="PRO_0000141298" description="Cobyric acid synthase">
    <location>
        <begin position="1"/>
        <end position="491"/>
    </location>
</feature>
<feature type="domain" description="GATase cobBQ-type" evidence="1">
    <location>
        <begin position="249"/>
        <end position="439"/>
    </location>
</feature>
<feature type="active site" description="Nucleophile" evidence="1">
    <location>
        <position position="329"/>
    </location>
</feature>
<feature type="active site" evidence="1">
    <location>
        <position position="431"/>
    </location>
</feature>
<protein>
    <recommendedName>
        <fullName evidence="1">Cobyric acid synthase</fullName>
    </recommendedName>
</protein>
<organism>
    <name type="scientific">Clostridium tetani (strain Massachusetts / E88)</name>
    <dbReference type="NCBI Taxonomy" id="212717"/>
    <lineage>
        <taxon>Bacteria</taxon>
        <taxon>Bacillati</taxon>
        <taxon>Bacillota</taxon>
        <taxon>Clostridia</taxon>
        <taxon>Eubacteriales</taxon>
        <taxon>Clostridiaceae</taxon>
        <taxon>Clostridium</taxon>
    </lineage>
</organism>
<evidence type="ECO:0000255" key="1">
    <source>
        <dbReference type="HAMAP-Rule" id="MF_00028"/>
    </source>
</evidence>
<keyword id="KW-0169">Cobalamin biosynthesis</keyword>
<keyword id="KW-0315">Glutamine amidotransferase</keyword>
<keyword id="KW-1185">Reference proteome</keyword>
<sequence length="491" mass="55118">MFKLAKIMIQGTGSSVGKSILVTALCRIFKQDGYTVCPYKSQNMALNSYITYDGKEMGRAQVLQAHAAGLEPEAYMNPILLKPTGDKKCQIIFNGEVYGNSTAMEYHNMKTKFGEKLKDQFKNIEEKFDIVVIEGAGSPAEINLRDKDIVNMGFAEMVDAPVLLAGDIDRGGVFASLAGTMLLLTEEERNRVKGTIINKFRGDIEILKPGLKMLEDIIKIPTVGVVPYLKFQLEDEDGAIDFNRNINAPIDIAVIKLPRISNFTDFDALKVEEDVSIRYITSKEDFGKPDLLIVPGSKNTIEDLLALRKCGLEEKIKEYSKTGTIIGICGGYQMLGKTLKDPYKVESEELETQGMGLLNVDTVFEKEKVTTRVKANSEDTEVYGYEIHMGICNYKEGAKPLFNIYDENGKKVNRNDGAINEKGNVMGTYIHGVFDGVEFREKVLNNIRKSKNMEERNAINYENLREKNLDMLADLVRENIDMDYIYKIIGM</sequence>